<name>MGSA_ECOSM</name>
<sequence>MELTTRTLPARKHIALVAHDHCKQMLMSWVERHQPLLEQHVLYATGTTGNLISRATGMNVNAMLSGPMGGDQQVGALISEGKIDVLIFFWDPLNAVPHDPDVKALLRLATVWNIPVATNVATADFIIQSPHFNDAVDILIPDYQRYLADRLK</sequence>
<keyword id="KW-0456">Lyase</keyword>
<accession>B1LJ35</accession>
<reference key="1">
    <citation type="journal article" date="2008" name="J. Bacteriol.">
        <title>Insights into the environmental resistance gene pool from the genome sequence of the multidrug-resistant environmental isolate Escherichia coli SMS-3-5.</title>
        <authorList>
            <person name="Fricke W.F."/>
            <person name="Wright M.S."/>
            <person name="Lindell A.H."/>
            <person name="Harkins D.M."/>
            <person name="Baker-Austin C."/>
            <person name="Ravel J."/>
            <person name="Stepanauskas R."/>
        </authorList>
    </citation>
    <scope>NUCLEOTIDE SEQUENCE [LARGE SCALE GENOMIC DNA]</scope>
    <source>
        <strain>SMS-3-5 / SECEC</strain>
    </source>
</reference>
<evidence type="ECO:0000255" key="1">
    <source>
        <dbReference type="HAMAP-Rule" id="MF_00549"/>
    </source>
</evidence>
<comment type="function">
    <text evidence="1">Catalyzes the formation of methylglyoxal from dihydroxyacetone phosphate.</text>
</comment>
<comment type="catalytic activity">
    <reaction evidence="1">
        <text>dihydroxyacetone phosphate = methylglyoxal + phosphate</text>
        <dbReference type="Rhea" id="RHEA:17937"/>
        <dbReference type="ChEBI" id="CHEBI:17158"/>
        <dbReference type="ChEBI" id="CHEBI:43474"/>
        <dbReference type="ChEBI" id="CHEBI:57642"/>
        <dbReference type="EC" id="4.2.3.3"/>
    </reaction>
</comment>
<comment type="similarity">
    <text evidence="1">Belongs to the methylglyoxal synthase family.</text>
</comment>
<gene>
    <name evidence="1" type="primary">mgsA</name>
    <name type="ordered locus">EcSMS35_2156</name>
</gene>
<feature type="chain" id="PRO_1000128993" description="Methylglyoxal synthase">
    <location>
        <begin position="1"/>
        <end position="152"/>
    </location>
</feature>
<feature type="domain" description="MGS-like" evidence="1">
    <location>
        <begin position="6"/>
        <end position="152"/>
    </location>
</feature>
<feature type="active site" description="Proton donor/acceptor" evidence="1">
    <location>
        <position position="71"/>
    </location>
</feature>
<feature type="binding site" evidence="1">
    <location>
        <position position="19"/>
    </location>
    <ligand>
        <name>substrate</name>
    </ligand>
</feature>
<feature type="binding site" evidence="1">
    <location>
        <position position="23"/>
    </location>
    <ligand>
        <name>substrate</name>
    </ligand>
</feature>
<feature type="binding site" evidence="1">
    <location>
        <begin position="45"/>
        <end position="48"/>
    </location>
    <ligand>
        <name>substrate</name>
    </ligand>
</feature>
<feature type="binding site" evidence="1">
    <location>
        <begin position="65"/>
        <end position="66"/>
    </location>
    <ligand>
        <name>substrate</name>
    </ligand>
</feature>
<feature type="binding site" evidence="1">
    <location>
        <position position="98"/>
    </location>
    <ligand>
        <name>substrate</name>
    </ligand>
</feature>
<dbReference type="EC" id="4.2.3.3" evidence="1"/>
<dbReference type="EMBL" id="CP000970">
    <property type="protein sequence ID" value="ACB18315.1"/>
    <property type="molecule type" value="Genomic_DNA"/>
</dbReference>
<dbReference type="RefSeq" id="WP_000424181.1">
    <property type="nucleotide sequence ID" value="NC_010498.1"/>
</dbReference>
<dbReference type="SMR" id="B1LJ35"/>
<dbReference type="GeneID" id="93776451"/>
<dbReference type="KEGG" id="ecm:EcSMS35_2156"/>
<dbReference type="HOGENOM" id="CLU_120420_0_1_6"/>
<dbReference type="Proteomes" id="UP000007011">
    <property type="component" value="Chromosome"/>
</dbReference>
<dbReference type="GO" id="GO:0005829">
    <property type="term" value="C:cytosol"/>
    <property type="evidence" value="ECO:0007669"/>
    <property type="project" value="TreeGrafter"/>
</dbReference>
<dbReference type="GO" id="GO:0008929">
    <property type="term" value="F:methylglyoxal synthase activity"/>
    <property type="evidence" value="ECO:0007669"/>
    <property type="project" value="UniProtKB-UniRule"/>
</dbReference>
<dbReference type="GO" id="GO:0019242">
    <property type="term" value="P:methylglyoxal biosynthetic process"/>
    <property type="evidence" value="ECO:0007669"/>
    <property type="project" value="UniProtKB-UniRule"/>
</dbReference>
<dbReference type="CDD" id="cd01422">
    <property type="entry name" value="MGS"/>
    <property type="match status" value="1"/>
</dbReference>
<dbReference type="FunFam" id="3.40.50.1380:FF:000002">
    <property type="entry name" value="Methylglyoxal synthase"/>
    <property type="match status" value="1"/>
</dbReference>
<dbReference type="Gene3D" id="3.40.50.1380">
    <property type="entry name" value="Methylglyoxal synthase-like domain"/>
    <property type="match status" value="1"/>
</dbReference>
<dbReference type="HAMAP" id="MF_00549">
    <property type="entry name" value="Methylglyoxal_synth"/>
    <property type="match status" value="1"/>
</dbReference>
<dbReference type="InterPro" id="IPR004363">
    <property type="entry name" value="Methylgl_synth"/>
</dbReference>
<dbReference type="InterPro" id="IPR018148">
    <property type="entry name" value="Methylglyoxal_synth_AS"/>
</dbReference>
<dbReference type="InterPro" id="IPR011607">
    <property type="entry name" value="MGS-like_dom"/>
</dbReference>
<dbReference type="InterPro" id="IPR036914">
    <property type="entry name" value="MGS-like_dom_sf"/>
</dbReference>
<dbReference type="NCBIfam" id="TIGR00160">
    <property type="entry name" value="MGSA"/>
    <property type="match status" value="1"/>
</dbReference>
<dbReference type="NCBIfam" id="NF003559">
    <property type="entry name" value="PRK05234.1"/>
    <property type="match status" value="1"/>
</dbReference>
<dbReference type="PANTHER" id="PTHR30492">
    <property type="entry name" value="METHYLGLYOXAL SYNTHASE"/>
    <property type="match status" value="1"/>
</dbReference>
<dbReference type="PANTHER" id="PTHR30492:SF0">
    <property type="entry name" value="METHYLGLYOXAL SYNTHASE"/>
    <property type="match status" value="1"/>
</dbReference>
<dbReference type="Pfam" id="PF02142">
    <property type="entry name" value="MGS"/>
    <property type="match status" value="1"/>
</dbReference>
<dbReference type="PIRSF" id="PIRSF006614">
    <property type="entry name" value="Methylglyox_syn"/>
    <property type="match status" value="1"/>
</dbReference>
<dbReference type="SMART" id="SM00851">
    <property type="entry name" value="MGS"/>
    <property type="match status" value="1"/>
</dbReference>
<dbReference type="SUPFAM" id="SSF52335">
    <property type="entry name" value="Methylglyoxal synthase-like"/>
    <property type="match status" value="1"/>
</dbReference>
<dbReference type="PROSITE" id="PS01335">
    <property type="entry name" value="METHYLGLYOXAL_SYNTH"/>
    <property type="match status" value="1"/>
</dbReference>
<dbReference type="PROSITE" id="PS51855">
    <property type="entry name" value="MGS"/>
    <property type="match status" value="1"/>
</dbReference>
<protein>
    <recommendedName>
        <fullName evidence="1">Methylglyoxal synthase</fullName>
        <shortName evidence="1">MGS</shortName>
        <ecNumber evidence="1">4.2.3.3</ecNumber>
    </recommendedName>
</protein>
<proteinExistence type="inferred from homology"/>
<organism>
    <name type="scientific">Escherichia coli (strain SMS-3-5 / SECEC)</name>
    <dbReference type="NCBI Taxonomy" id="439855"/>
    <lineage>
        <taxon>Bacteria</taxon>
        <taxon>Pseudomonadati</taxon>
        <taxon>Pseudomonadota</taxon>
        <taxon>Gammaproteobacteria</taxon>
        <taxon>Enterobacterales</taxon>
        <taxon>Enterobacteriaceae</taxon>
        <taxon>Escherichia</taxon>
    </lineage>
</organism>